<comment type="function">
    <text evidence="1">Component of the ceramide synthase complex required for synthesis of ceramides.</text>
</comment>
<comment type="subunit">
    <text evidence="1">Component of the ceramide synthase complex.</text>
</comment>
<comment type="subcellular location">
    <subcellularLocation>
        <location evidence="1">Endoplasmic reticulum membrane</location>
        <topology evidence="1">Single-pass type II membrane protein</topology>
    </subcellularLocation>
</comment>
<comment type="similarity">
    <text evidence="3">Belongs to the LIP1 family.</text>
</comment>
<reference key="1">
    <citation type="journal article" date="2004" name="Nature">
        <title>Genome evolution in yeasts.</title>
        <authorList>
            <person name="Dujon B."/>
            <person name="Sherman D."/>
            <person name="Fischer G."/>
            <person name="Durrens P."/>
            <person name="Casaregola S."/>
            <person name="Lafontaine I."/>
            <person name="de Montigny J."/>
            <person name="Marck C."/>
            <person name="Neuveglise C."/>
            <person name="Talla E."/>
            <person name="Goffard N."/>
            <person name="Frangeul L."/>
            <person name="Aigle M."/>
            <person name="Anthouard V."/>
            <person name="Babour A."/>
            <person name="Barbe V."/>
            <person name="Barnay S."/>
            <person name="Blanchin S."/>
            <person name="Beckerich J.-M."/>
            <person name="Beyne E."/>
            <person name="Bleykasten C."/>
            <person name="Boisrame A."/>
            <person name="Boyer J."/>
            <person name="Cattolico L."/>
            <person name="Confanioleri F."/>
            <person name="de Daruvar A."/>
            <person name="Despons L."/>
            <person name="Fabre E."/>
            <person name="Fairhead C."/>
            <person name="Ferry-Dumazet H."/>
            <person name="Groppi A."/>
            <person name="Hantraye F."/>
            <person name="Hennequin C."/>
            <person name="Jauniaux N."/>
            <person name="Joyet P."/>
            <person name="Kachouri R."/>
            <person name="Kerrest A."/>
            <person name="Koszul R."/>
            <person name="Lemaire M."/>
            <person name="Lesur I."/>
            <person name="Ma L."/>
            <person name="Muller H."/>
            <person name="Nicaud J.-M."/>
            <person name="Nikolski M."/>
            <person name="Oztas S."/>
            <person name="Ozier-Kalogeropoulos O."/>
            <person name="Pellenz S."/>
            <person name="Potier S."/>
            <person name="Richard G.-F."/>
            <person name="Straub M.-L."/>
            <person name="Suleau A."/>
            <person name="Swennen D."/>
            <person name="Tekaia F."/>
            <person name="Wesolowski-Louvel M."/>
            <person name="Westhof E."/>
            <person name="Wirth B."/>
            <person name="Zeniou-Meyer M."/>
            <person name="Zivanovic Y."/>
            <person name="Bolotin-Fukuhara M."/>
            <person name="Thierry A."/>
            <person name="Bouchier C."/>
            <person name="Caudron B."/>
            <person name="Scarpelli C."/>
            <person name="Gaillardin C."/>
            <person name="Weissenbach J."/>
            <person name="Wincker P."/>
            <person name="Souciet J.-L."/>
        </authorList>
    </citation>
    <scope>NUCLEOTIDE SEQUENCE [LARGE SCALE GENOMIC DNA]</scope>
    <source>
        <strain>ATCC 8585 / CBS 2359 / DSM 70799 / NBRC 1267 / NRRL Y-1140 / WM37</strain>
    </source>
</reference>
<gene>
    <name type="primary">LIP1</name>
    <name type="ordered locus">KLLA0A09999g</name>
</gene>
<organism>
    <name type="scientific">Kluyveromyces lactis (strain ATCC 8585 / CBS 2359 / DSM 70799 / NBRC 1267 / NRRL Y-1140 / WM37)</name>
    <name type="common">Yeast</name>
    <name type="synonym">Candida sphaerica</name>
    <dbReference type="NCBI Taxonomy" id="284590"/>
    <lineage>
        <taxon>Eukaryota</taxon>
        <taxon>Fungi</taxon>
        <taxon>Dikarya</taxon>
        <taxon>Ascomycota</taxon>
        <taxon>Saccharomycotina</taxon>
        <taxon>Saccharomycetes</taxon>
        <taxon>Saccharomycetales</taxon>
        <taxon>Saccharomycetaceae</taxon>
        <taxon>Kluyveromyces</taxon>
    </lineage>
</organism>
<sequence length="147" mass="16768">MATQQNKNRVYILLQYVLAALVLIAAVEYFKYKTRISYEWFHCTVQSEELFDHPEGSPLKLWAIGGPSCDKRGELKTIMKRITMDFDPNVEPVKFCIVEDTKVKSIHYPIEDGNKGDPGYISFVGYERDSDVVEQACASYAATVFNL</sequence>
<protein>
    <recommendedName>
        <fullName>Ceramide synthase subunit LIP1</fullName>
    </recommendedName>
</protein>
<evidence type="ECO:0000250" key="1"/>
<evidence type="ECO:0000255" key="2"/>
<evidence type="ECO:0000305" key="3"/>
<name>LIP1_KLULA</name>
<accession>Q6CXA2</accession>
<feature type="chain" id="PRO_0000308780" description="Ceramide synthase subunit LIP1">
    <location>
        <begin position="1"/>
        <end position="147"/>
    </location>
</feature>
<feature type="topological domain" description="Cytoplasmic" evidence="1">
    <location>
        <begin position="1"/>
        <end position="9"/>
    </location>
</feature>
<feature type="transmembrane region" description="Helical; Signal-anchor for type II membrane protein" evidence="2">
    <location>
        <begin position="10"/>
        <end position="30"/>
    </location>
</feature>
<feature type="topological domain" description="Lumenal" evidence="1">
    <location>
        <begin position="31"/>
        <end position="147"/>
    </location>
</feature>
<keyword id="KW-0256">Endoplasmic reticulum</keyword>
<keyword id="KW-0444">Lipid biosynthesis</keyword>
<keyword id="KW-0443">Lipid metabolism</keyword>
<keyword id="KW-0472">Membrane</keyword>
<keyword id="KW-1185">Reference proteome</keyword>
<keyword id="KW-0735">Signal-anchor</keyword>
<keyword id="KW-0812">Transmembrane</keyword>
<keyword id="KW-1133">Transmembrane helix</keyword>
<dbReference type="EMBL" id="CR382121">
    <property type="protein sequence ID" value="CAH03025.1"/>
    <property type="molecule type" value="Genomic_DNA"/>
</dbReference>
<dbReference type="RefSeq" id="XP_451437.1">
    <property type="nucleotide sequence ID" value="XM_451437.1"/>
</dbReference>
<dbReference type="SMR" id="Q6CXA2"/>
<dbReference type="FunCoup" id="Q6CXA2">
    <property type="interactions" value="29"/>
</dbReference>
<dbReference type="PaxDb" id="284590-Q6CXA2"/>
<dbReference type="KEGG" id="kla:KLLA0_A09999g"/>
<dbReference type="eggNOG" id="ENOG502S1YW">
    <property type="taxonomic scope" value="Eukaryota"/>
</dbReference>
<dbReference type="HOGENOM" id="CLU_1759093_0_0_1"/>
<dbReference type="InParanoid" id="Q6CXA2"/>
<dbReference type="OMA" id="STRINYE"/>
<dbReference type="Proteomes" id="UP000000598">
    <property type="component" value="Chromosome A"/>
</dbReference>
<dbReference type="GO" id="GO:0005789">
    <property type="term" value="C:endoplasmic reticulum membrane"/>
    <property type="evidence" value="ECO:0007669"/>
    <property type="project" value="UniProtKB-SubCell"/>
</dbReference>
<dbReference type="GO" id="GO:0006629">
    <property type="term" value="P:lipid metabolic process"/>
    <property type="evidence" value="ECO:0007669"/>
    <property type="project" value="UniProtKB-KW"/>
</dbReference>
<dbReference type="CDD" id="cd24143">
    <property type="entry name" value="LIP1-like"/>
    <property type="match status" value="1"/>
</dbReference>
<proteinExistence type="inferred from homology"/>